<organism>
    <name type="scientific">Alkalilimnicola ehrlichii (strain ATCC BAA-1101 / DSM 17681 / MLHE-1)</name>
    <dbReference type="NCBI Taxonomy" id="187272"/>
    <lineage>
        <taxon>Bacteria</taxon>
        <taxon>Pseudomonadati</taxon>
        <taxon>Pseudomonadota</taxon>
        <taxon>Gammaproteobacteria</taxon>
        <taxon>Chromatiales</taxon>
        <taxon>Ectothiorhodospiraceae</taxon>
        <taxon>Alkalilimnicola</taxon>
    </lineage>
</organism>
<proteinExistence type="inferred from homology"/>
<sequence length="219" mass="23797">MKVILLGPPGAGKGTQAAGICERFDIPQISTGDMLRAAVKAGTPLGQQAKKVMDAGELVSDDIIMGLVKERIAEPDCANGFLFDGFPRTIAQAEGLKAEGINVDAVVEIQVPDEDIVQRMAGRRVHPGSGRVYHVEHNPPKEEGKDDVTGEPLVQRDDDQEETVRKRLGVYHEQTQPLVEYYSDWAAKGGDGAPRYIVIKGVGSVDDIRNRILSELERA</sequence>
<protein>
    <recommendedName>
        <fullName evidence="1">Adenylate kinase</fullName>
        <shortName evidence="1">AK</shortName>
        <ecNumber evidence="1">2.7.4.3</ecNumber>
    </recommendedName>
    <alternativeName>
        <fullName evidence="1">ATP-AMP transphosphorylase</fullName>
    </alternativeName>
    <alternativeName>
        <fullName evidence="1">ATP:AMP phosphotransferase</fullName>
    </alternativeName>
    <alternativeName>
        <fullName evidence="1">Adenylate monophosphate kinase</fullName>
    </alternativeName>
</protein>
<keyword id="KW-0067">ATP-binding</keyword>
<keyword id="KW-0963">Cytoplasm</keyword>
<keyword id="KW-0418">Kinase</keyword>
<keyword id="KW-0545">Nucleotide biosynthesis</keyword>
<keyword id="KW-0547">Nucleotide-binding</keyword>
<keyword id="KW-1185">Reference proteome</keyword>
<keyword id="KW-0808">Transferase</keyword>
<gene>
    <name evidence="1" type="primary">adk</name>
    <name type="ordered locus">Mlg_1256</name>
</gene>
<feature type="chain" id="PRO_1000058780" description="Adenylate kinase">
    <location>
        <begin position="1"/>
        <end position="219"/>
    </location>
</feature>
<feature type="region of interest" description="NMP" evidence="1">
    <location>
        <begin position="30"/>
        <end position="59"/>
    </location>
</feature>
<feature type="region of interest" description="LID" evidence="1">
    <location>
        <begin position="122"/>
        <end position="159"/>
    </location>
</feature>
<feature type="region of interest" description="Disordered" evidence="2">
    <location>
        <begin position="129"/>
        <end position="152"/>
    </location>
</feature>
<feature type="compositionally biased region" description="Basic and acidic residues" evidence="2">
    <location>
        <begin position="133"/>
        <end position="152"/>
    </location>
</feature>
<feature type="binding site" evidence="1">
    <location>
        <begin position="10"/>
        <end position="15"/>
    </location>
    <ligand>
        <name>ATP</name>
        <dbReference type="ChEBI" id="CHEBI:30616"/>
    </ligand>
</feature>
<feature type="binding site" evidence="1">
    <location>
        <position position="31"/>
    </location>
    <ligand>
        <name>AMP</name>
        <dbReference type="ChEBI" id="CHEBI:456215"/>
    </ligand>
</feature>
<feature type="binding site" evidence="1">
    <location>
        <position position="36"/>
    </location>
    <ligand>
        <name>AMP</name>
        <dbReference type="ChEBI" id="CHEBI:456215"/>
    </ligand>
</feature>
<feature type="binding site" evidence="1">
    <location>
        <begin position="57"/>
        <end position="59"/>
    </location>
    <ligand>
        <name>AMP</name>
        <dbReference type="ChEBI" id="CHEBI:456215"/>
    </ligand>
</feature>
<feature type="binding site" evidence="1">
    <location>
        <begin position="85"/>
        <end position="88"/>
    </location>
    <ligand>
        <name>AMP</name>
        <dbReference type="ChEBI" id="CHEBI:456215"/>
    </ligand>
</feature>
<feature type="binding site" evidence="1">
    <location>
        <position position="92"/>
    </location>
    <ligand>
        <name>AMP</name>
        <dbReference type="ChEBI" id="CHEBI:456215"/>
    </ligand>
</feature>
<feature type="binding site" evidence="1">
    <location>
        <position position="123"/>
    </location>
    <ligand>
        <name>ATP</name>
        <dbReference type="ChEBI" id="CHEBI:30616"/>
    </ligand>
</feature>
<feature type="binding site" evidence="1">
    <location>
        <begin position="132"/>
        <end position="133"/>
    </location>
    <ligand>
        <name>ATP</name>
        <dbReference type="ChEBI" id="CHEBI:30616"/>
    </ligand>
</feature>
<feature type="binding site" evidence="1">
    <location>
        <position position="156"/>
    </location>
    <ligand>
        <name>AMP</name>
        <dbReference type="ChEBI" id="CHEBI:456215"/>
    </ligand>
</feature>
<feature type="binding site" evidence="1">
    <location>
        <position position="167"/>
    </location>
    <ligand>
        <name>AMP</name>
        <dbReference type="ChEBI" id="CHEBI:456215"/>
    </ligand>
</feature>
<feature type="binding site" evidence="1">
    <location>
        <position position="203"/>
    </location>
    <ligand>
        <name>ATP</name>
        <dbReference type="ChEBI" id="CHEBI:30616"/>
    </ligand>
</feature>
<comment type="function">
    <text evidence="1">Catalyzes the reversible transfer of the terminal phosphate group between ATP and AMP. Plays an important role in cellular energy homeostasis and in adenine nucleotide metabolism.</text>
</comment>
<comment type="catalytic activity">
    <reaction evidence="1">
        <text>AMP + ATP = 2 ADP</text>
        <dbReference type="Rhea" id="RHEA:12973"/>
        <dbReference type="ChEBI" id="CHEBI:30616"/>
        <dbReference type="ChEBI" id="CHEBI:456215"/>
        <dbReference type="ChEBI" id="CHEBI:456216"/>
        <dbReference type="EC" id="2.7.4.3"/>
    </reaction>
</comment>
<comment type="pathway">
    <text evidence="1">Purine metabolism; AMP biosynthesis via salvage pathway; AMP from ADP: step 1/1.</text>
</comment>
<comment type="subunit">
    <text evidence="1">Monomer.</text>
</comment>
<comment type="subcellular location">
    <subcellularLocation>
        <location evidence="1">Cytoplasm</location>
    </subcellularLocation>
</comment>
<comment type="domain">
    <text evidence="1">Consists of three domains, a large central CORE domain and two small peripheral domains, NMPbind and LID, which undergo movements during catalysis. The LID domain closes over the site of phosphoryl transfer upon ATP binding. Assembling and dissambling the active center during each catalytic cycle provides an effective means to prevent ATP hydrolysis.</text>
</comment>
<comment type="similarity">
    <text evidence="1">Belongs to the adenylate kinase family.</text>
</comment>
<reference key="1">
    <citation type="submission" date="2006-08" db="EMBL/GenBank/DDBJ databases">
        <title>Complete sequence of Alkalilimnicola ehrilichei MLHE-1.</title>
        <authorList>
            <person name="Copeland A."/>
            <person name="Lucas S."/>
            <person name="Lapidus A."/>
            <person name="Barry K."/>
            <person name="Detter J.C."/>
            <person name="Glavina del Rio T."/>
            <person name="Hammon N."/>
            <person name="Israni S."/>
            <person name="Dalin E."/>
            <person name="Tice H."/>
            <person name="Pitluck S."/>
            <person name="Sims D."/>
            <person name="Brettin T."/>
            <person name="Bruce D."/>
            <person name="Han C."/>
            <person name="Tapia R."/>
            <person name="Gilna P."/>
            <person name="Schmutz J."/>
            <person name="Larimer F."/>
            <person name="Land M."/>
            <person name="Hauser L."/>
            <person name="Kyrpides N."/>
            <person name="Mikhailova N."/>
            <person name="Oremland R.S."/>
            <person name="Hoeft S.E."/>
            <person name="Switzer-Blum J."/>
            <person name="Kulp T."/>
            <person name="King G."/>
            <person name="Tabita R."/>
            <person name="Witte B."/>
            <person name="Santini J.M."/>
            <person name="Basu P."/>
            <person name="Hollibaugh J.T."/>
            <person name="Xie G."/>
            <person name="Stolz J.F."/>
            <person name="Richardson P."/>
        </authorList>
    </citation>
    <scope>NUCLEOTIDE SEQUENCE [LARGE SCALE GENOMIC DNA]</scope>
    <source>
        <strain>ATCC BAA-1101 / DSM 17681 / MLHE-1</strain>
    </source>
</reference>
<accession>Q0A982</accession>
<dbReference type="EC" id="2.7.4.3" evidence="1"/>
<dbReference type="EMBL" id="CP000453">
    <property type="protein sequence ID" value="ABI56605.1"/>
    <property type="molecule type" value="Genomic_DNA"/>
</dbReference>
<dbReference type="RefSeq" id="WP_011629000.1">
    <property type="nucleotide sequence ID" value="NC_008340.1"/>
</dbReference>
<dbReference type="SMR" id="Q0A982"/>
<dbReference type="KEGG" id="aeh:Mlg_1256"/>
<dbReference type="eggNOG" id="COG0563">
    <property type="taxonomic scope" value="Bacteria"/>
</dbReference>
<dbReference type="HOGENOM" id="CLU_032354_1_2_6"/>
<dbReference type="OrthoDB" id="9805030at2"/>
<dbReference type="UniPathway" id="UPA00588">
    <property type="reaction ID" value="UER00649"/>
</dbReference>
<dbReference type="Proteomes" id="UP000001962">
    <property type="component" value="Chromosome"/>
</dbReference>
<dbReference type="GO" id="GO:0005737">
    <property type="term" value="C:cytoplasm"/>
    <property type="evidence" value="ECO:0007669"/>
    <property type="project" value="UniProtKB-SubCell"/>
</dbReference>
<dbReference type="GO" id="GO:0004017">
    <property type="term" value="F:adenylate kinase activity"/>
    <property type="evidence" value="ECO:0007669"/>
    <property type="project" value="UniProtKB-UniRule"/>
</dbReference>
<dbReference type="GO" id="GO:0005524">
    <property type="term" value="F:ATP binding"/>
    <property type="evidence" value="ECO:0007669"/>
    <property type="project" value="UniProtKB-UniRule"/>
</dbReference>
<dbReference type="GO" id="GO:0044209">
    <property type="term" value="P:AMP salvage"/>
    <property type="evidence" value="ECO:0007669"/>
    <property type="project" value="UniProtKB-UniRule"/>
</dbReference>
<dbReference type="CDD" id="cd01428">
    <property type="entry name" value="ADK"/>
    <property type="match status" value="1"/>
</dbReference>
<dbReference type="FunFam" id="3.40.50.300:FF:000106">
    <property type="entry name" value="Adenylate kinase mitochondrial"/>
    <property type="match status" value="1"/>
</dbReference>
<dbReference type="Gene3D" id="3.40.50.300">
    <property type="entry name" value="P-loop containing nucleotide triphosphate hydrolases"/>
    <property type="match status" value="1"/>
</dbReference>
<dbReference type="HAMAP" id="MF_00235">
    <property type="entry name" value="Adenylate_kinase_Adk"/>
    <property type="match status" value="1"/>
</dbReference>
<dbReference type="InterPro" id="IPR006259">
    <property type="entry name" value="Adenyl_kin_sub"/>
</dbReference>
<dbReference type="InterPro" id="IPR000850">
    <property type="entry name" value="Adenylat/UMP-CMP_kin"/>
</dbReference>
<dbReference type="InterPro" id="IPR033690">
    <property type="entry name" value="Adenylat_kinase_CS"/>
</dbReference>
<dbReference type="InterPro" id="IPR007862">
    <property type="entry name" value="Adenylate_kinase_lid-dom"/>
</dbReference>
<dbReference type="InterPro" id="IPR027417">
    <property type="entry name" value="P-loop_NTPase"/>
</dbReference>
<dbReference type="NCBIfam" id="TIGR01351">
    <property type="entry name" value="adk"/>
    <property type="match status" value="1"/>
</dbReference>
<dbReference type="NCBIfam" id="NF001379">
    <property type="entry name" value="PRK00279.1-1"/>
    <property type="match status" value="1"/>
</dbReference>
<dbReference type="NCBIfam" id="NF001380">
    <property type="entry name" value="PRK00279.1-2"/>
    <property type="match status" value="1"/>
</dbReference>
<dbReference type="NCBIfam" id="NF001381">
    <property type="entry name" value="PRK00279.1-3"/>
    <property type="match status" value="1"/>
</dbReference>
<dbReference type="NCBIfam" id="NF011100">
    <property type="entry name" value="PRK14527.1"/>
    <property type="match status" value="1"/>
</dbReference>
<dbReference type="PANTHER" id="PTHR23359">
    <property type="entry name" value="NUCLEOTIDE KINASE"/>
    <property type="match status" value="1"/>
</dbReference>
<dbReference type="Pfam" id="PF00406">
    <property type="entry name" value="ADK"/>
    <property type="match status" value="1"/>
</dbReference>
<dbReference type="Pfam" id="PF05191">
    <property type="entry name" value="ADK_lid"/>
    <property type="match status" value="1"/>
</dbReference>
<dbReference type="PRINTS" id="PR00094">
    <property type="entry name" value="ADENYLTKNASE"/>
</dbReference>
<dbReference type="SUPFAM" id="SSF52540">
    <property type="entry name" value="P-loop containing nucleoside triphosphate hydrolases"/>
    <property type="match status" value="1"/>
</dbReference>
<dbReference type="PROSITE" id="PS00113">
    <property type="entry name" value="ADENYLATE_KINASE"/>
    <property type="match status" value="1"/>
</dbReference>
<evidence type="ECO:0000255" key="1">
    <source>
        <dbReference type="HAMAP-Rule" id="MF_00235"/>
    </source>
</evidence>
<evidence type="ECO:0000256" key="2">
    <source>
        <dbReference type="SAM" id="MobiDB-lite"/>
    </source>
</evidence>
<name>KAD_ALKEH</name>